<proteinExistence type="evidence at protein level"/>
<dbReference type="EMBL" id="U10556">
    <property type="status" value="NOT_ANNOTATED_CDS"/>
    <property type="molecule type" value="Genomic_DNA"/>
</dbReference>
<dbReference type="EMBL" id="BK006934">
    <property type="status" value="NOT_ANNOTATED_CDS"/>
    <property type="molecule type" value="Genomic_DNA"/>
</dbReference>
<dbReference type="STRING" id="4932.YHR073W-A"/>
<dbReference type="PaxDb" id="4932-YHR073W-A"/>
<dbReference type="EnsemblFungi" id="YHR073W-A_mRNA">
    <property type="protein sequence ID" value="YHR073W-A"/>
    <property type="gene ID" value="YHR073W-A"/>
</dbReference>
<dbReference type="AGR" id="SGD:S000028834"/>
<dbReference type="SGD" id="S000028834">
    <property type="gene designation" value="YHR073W-A"/>
</dbReference>
<dbReference type="HOGENOM" id="CLU_2980859_0_0_1"/>
<dbReference type="InParanoid" id="P0C5N7"/>
<dbReference type="PRO" id="PR:P0C5N7"/>
<dbReference type="Proteomes" id="UP000002311">
    <property type="component" value="Chromosome VIII"/>
</dbReference>
<dbReference type="RNAct" id="P0C5N7">
    <property type="molecule type" value="protein"/>
</dbReference>
<name>YH73A_YEAST</name>
<gene>
    <name type="ordered locus">YHR073W-A</name>
</gene>
<feature type="chain" id="PRO_0000309035" description="Uncharacterized protein YHR073W-A">
    <location>
        <begin position="1"/>
        <end position="58"/>
    </location>
</feature>
<protein>
    <recommendedName>
        <fullName>Uncharacterized protein YHR073W-A</fullName>
    </recommendedName>
</protein>
<accession>P0C5N7</accession>
<organism>
    <name type="scientific">Saccharomyces cerevisiae (strain ATCC 204508 / S288c)</name>
    <name type="common">Baker's yeast</name>
    <dbReference type="NCBI Taxonomy" id="559292"/>
    <lineage>
        <taxon>Eukaryota</taxon>
        <taxon>Fungi</taxon>
        <taxon>Dikarya</taxon>
        <taxon>Ascomycota</taxon>
        <taxon>Saccharomycotina</taxon>
        <taxon>Saccharomycetes</taxon>
        <taxon>Saccharomycetales</taxon>
        <taxon>Saccharomycetaceae</taxon>
        <taxon>Saccharomyces</taxon>
    </lineage>
</organism>
<sequence length="58" mass="6772">MDRIIRGKRDHILHCPLAAYSSNPRKYPYVKNSLRQDSLWSRGSATFPVTLWSKVILK</sequence>
<keyword id="KW-1185">Reference proteome</keyword>
<reference key="1">
    <citation type="journal article" date="1994" name="Science">
        <title>Complete nucleotide sequence of Saccharomyces cerevisiae chromosome VIII.</title>
        <authorList>
            <person name="Johnston M."/>
            <person name="Andrews S."/>
            <person name="Brinkman R."/>
            <person name="Cooper J."/>
            <person name="Ding H."/>
            <person name="Dover J."/>
            <person name="Du Z."/>
            <person name="Favello A."/>
            <person name="Fulton L."/>
            <person name="Gattung S."/>
            <person name="Geisel C."/>
            <person name="Kirsten J."/>
            <person name="Kucaba T."/>
            <person name="Hillier L.W."/>
            <person name="Jier M."/>
            <person name="Johnston L."/>
            <person name="Langston Y."/>
            <person name="Latreille P."/>
            <person name="Louis E.J."/>
            <person name="Macri C."/>
            <person name="Mardis E."/>
            <person name="Menezes S."/>
            <person name="Mouser L."/>
            <person name="Nhan M."/>
            <person name="Rifkin L."/>
            <person name="Riles L."/>
            <person name="St Peter H."/>
            <person name="Trevaskis E."/>
            <person name="Vaughan K."/>
            <person name="Vignati D."/>
            <person name="Wilcox L."/>
            <person name="Wohldman P."/>
            <person name="Waterston R."/>
            <person name="Wilson R."/>
            <person name="Vaudin M."/>
        </authorList>
    </citation>
    <scope>NUCLEOTIDE SEQUENCE [LARGE SCALE GENOMIC DNA]</scope>
    <source>
        <strain>ATCC 204508 / S288c</strain>
    </source>
</reference>
<reference key="2">
    <citation type="journal article" date="2014" name="G3 (Bethesda)">
        <title>The reference genome sequence of Saccharomyces cerevisiae: Then and now.</title>
        <authorList>
            <person name="Engel S.R."/>
            <person name="Dietrich F.S."/>
            <person name="Fisk D.G."/>
            <person name="Binkley G."/>
            <person name="Balakrishnan R."/>
            <person name="Costanzo M.C."/>
            <person name="Dwight S.S."/>
            <person name="Hitz B.C."/>
            <person name="Karra K."/>
            <person name="Nash R.S."/>
            <person name="Weng S."/>
            <person name="Wong E.D."/>
            <person name="Lloyd P."/>
            <person name="Skrzypek M.S."/>
            <person name="Miyasato S.R."/>
            <person name="Simison M."/>
            <person name="Cherry J.M."/>
        </authorList>
    </citation>
    <scope>GENOME REANNOTATION</scope>
    <source>
        <strain>ATCC 204508 / S288c</strain>
    </source>
</reference>
<reference key="3">
    <citation type="journal article" date="2002" name="Genome Res.">
        <title>Parallel identification of new genes in Saccharomyces cerevisiae.</title>
        <authorList>
            <person name="Oshiro G."/>
            <person name="Wodicka L.M."/>
            <person name="Washburn M.P."/>
            <person name="Yates J.R. III"/>
            <person name="Lockhart D.J."/>
            <person name="Winzeler E.A."/>
        </authorList>
    </citation>
    <scope>IDENTIFICATION BY MASS SPECTROMETRY</scope>
</reference>